<proteinExistence type="inferred from homology"/>
<sequence>MLVLGIESTAHTLGVGIAKDQPPYILANERDTFVPKEGGMKPGDLLKHHAEVSGTILRRALEKANISINDINYIAVALGPGIGPALRVGATLARALSLKYNKKLVPVNHGIGHIEIGYLTTEAKDPLILYLSGGNTIITTFYKGRFRIFGETLDIALGNMMDVFVREVNLAPPYIINGKHAIDICSEKGSKLLKLPYVVKGQDMSFSGLLTAALRLVGKEKLEDICYSIREIAFDMLLEATERALALTSKKELMIVGGVAASVSLRKKLEELGKEWDVQIKIVPPEFAGDNGAMIAYAGMLAASKGVFIDVDKSYIRPRWRVDEVDIPWRN</sequence>
<evidence type="ECO:0000255" key="1">
    <source>
        <dbReference type="HAMAP-Rule" id="MF_01446"/>
    </source>
</evidence>
<dbReference type="EC" id="2.3.1.234" evidence="1"/>
<dbReference type="EMBL" id="CP001402">
    <property type="protein sequence ID" value="ACR42324.1"/>
    <property type="molecule type" value="Genomic_DNA"/>
</dbReference>
<dbReference type="RefSeq" id="WP_012711653.1">
    <property type="nucleotide sequence ID" value="NC_012726.1"/>
</dbReference>
<dbReference type="SMR" id="C4KIB0"/>
<dbReference type="GeneID" id="84062028"/>
<dbReference type="KEGG" id="sid:M164_1720"/>
<dbReference type="HOGENOM" id="CLU_023208_2_2_2"/>
<dbReference type="Proteomes" id="UP000001479">
    <property type="component" value="Chromosome"/>
</dbReference>
<dbReference type="GO" id="GO:0005737">
    <property type="term" value="C:cytoplasm"/>
    <property type="evidence" value="ECO:0007669"/>
    <property type="project" value="UniProtKB-SubCell"/>
</dbReference>
<dbReference type="GO" id="GO:0000408">
    <property type="term" value="C:EKC/KEOPS complex"/>
    <property type="evidence" value="ECO:0007669"/>
    <property type="project" value="InterPro"/>
</dbReference>
<dbReference type="GO" id="GO:0005506">
    <property type="term" value="F:iron ion binding"/>
    <property type="evidence" value="ECO:0007669"/>
    <property type="project" value="UniProtKB-UniRule"/>
</dbReference>
<dbReference type="GO" id="GO:0061711">
    <property type="term" value="F:N(6)-L-threonylcarbamoyladenine synthase activity"/>
    <property type="evidence" value="ECO:0007669"/>
    <property type="project" value="UniProtKB-EC"/>
</dbReference>
<dbReference type="GO" id="GO:0002949">
    <property type="term" value="P:tRNA threonylcarbamoyladenosine modification"/>
    <property type="evidence" value="ECO:0007669"/>
    <property type="project" value="UniProtKB-UniRule"/>
</dbReference>
<dbReference type="FunFam" id="3.30.420.40:FF:000229">
    <property type="entry name" value="tRNA N6-adenosine threonylcarbamoyltransferase"/>
    <property type="match status" value="1"/>
</dbReference>
<dbReference type="Gene3D" id="3.30.420.40">
    <property type="match status" value="2"/>
</dbReference>
<dbReference type="HAMAP" id="MF_01446">
    <property type="entry name" value="Kae1"/>
    <property type="match status" value="1"/>
</dbReference>
<dbReference type="InterPro" id="IPR043129">
    <property type="entry name" value="ATPase_NBD"/>
</dbReference>
<dbReference type="InterPro" id="IPR000905">
    <property type="entry name" value="Gcp-like_dom"/>
</dbReference>
<dbReference type="InterPro" id="IPR017861">
    <property type="entry name" value="KAE1/TsaD"/>
</dbReference>
<dbReference type="InterPro" id="IPR034680">
    <property type="entry name" value="Kae1_archaea_euk"/>
</dbReference>
<dbReference type="NCBIfam" id="TIGR03722">
    <property type="entry name" value="arch_KAE1"/>
    <property type="match status" value="1"/>
</dbReference>
<dbReference type="NCBIfam" id="TIGR00329">
    <property type="entry name" value="gcp_kae1"/>
    <property type="match status" value="1"/>
</dbReference>
<dbReference type="PANTHER" id="PTHR11735">
    <property type="entry name" value="TRNA N6-ADENOSINE THREONYLCARBAMOYLTRANSFERASE"/>
    <property type="match status" value="1"/>
</dbReference>
<dbReference type="PANTHER" id="PTHR11735:SF14">
    <property type="entry name" value="TRNA N6-ADENOSINE THREONYLCARBAMOYLTRANSFERASE"/>
    <property type="match status" value="1"/>
</dbReference>
<dbReference type="Pfam" id="PF00814">
    <property type="entry name" value="TsaD"/>
    <property type="match status" value="1"/>
</dbReference>
<dbReference type="PRINTS" id="PR00789">
    <property type="entry name" value="OSIALOPTASE"/>
</dbReference>
<dbReference type="SUPFAM" id="SSF53067">
    <property type="entry name" value="Actin-like ATPase domain"/>
    <property type="match status" value="1"/>
</dbReference>
<gene>
    <name evidence="1" type="primary">kae1</name>
    <name type="ordered locus">M164_1720</name>
</gene>
<organism>
    <name type="scientific">Saccharolobus islandicus (strain M.16.4 / Kamchatka #3)</name>
    <name type="common">Sulfolobus islandicus</name>
    <dbReference type="NCBI Taxonomy" id="426118"/>
    <lineage>
        <taxon>Archaea</taxon>
        <taxon>Thermoproteota</taxon>
        <taxon>Thermoprotei</taxon>
        <taxon>Sulfolobales</taxon>
        <taxon>Sulfolobaceae</taxon>
        <taxon>Saccharolobus</taxon>
    </lineage>
</organism>
<protein>
    <recommendedName>
        <fullName evidence="1">tRNA N6-adenosine threonylcarbamoyltransferase</fullName>
        <ecNumber evidence="1">2.3.1.234</ecNumber>
    </recommendedName>
    <alternativeName>
        <fullName evidence="1">N6-L-threonylcarbamoyladenine synthase</fullName>
        <shortName evidence="1">t(6)A synthase</shortName>
    </alternativeName>
    <alternativeName>
        <fullName evidence="1">t(6)A37 threonylcarbamoyladenosine biosynthesis protein Kae1</fullName>
    </alternativeName>
    <alternativeName>
        <fullName evidence="1">tRNA threonylcarbamoyladenosine biosynthesis protein Kae1</fullName>
    </alternativeName>
</protein>
<accession>C4KIB0</accession>
<feature type="chain" id="PRO_1000215314" description="tRNA N6-adenosine threonylcarbamoyltransferase">
    <location>
        <begin position="1"/>
        <end position="331"/>
    </location>
</feature>
<feature type="binding site" evidence="1">
    <location>
        <position position="109"/>
    </location>
    <ligand>
        <name>Fe cation</name>
        <dbReference type="ChEBI" id="CHEBI:24875"/>
    </ligand>
</feature>
<feature type="binding site" evidence="1">
    <location>
        <position position="113"/>
    </location>
    <ligand>
        <name>Fe cation</name>
        <dbReference type="ChEBI" id="CHEBI:24875"/>
    </ligand>
</feature>
<feature type="binding site" evidence="1">
    <location>
        <begin position="130"/>
        <end position="134"/>
    </location>
    <ligand>
        <name>substrate</name>
    </ligand>
</feature>
<feature type="binding site" evidence="1">
    <location>
        <position position="130"/>
    </location>
    <ligand>
        <name>Fe cation</name>
        <dbReference type="ChEBI" id="CHEBI:24875"/>
    </ligand>
</feature>
<feature type="binding site" evidence="1">
    <location>
        <position position="162"/>
    </location>
    <ligand>
        <name>substrate</name>
    </ligand>
</feature>
<feature type="binding site" evidence="1">
    <location>
        <position position="183"/>
    </location>
    <ligand>
        <name>substrate</name>
    </ligand>
</feature>
<feature type="binding site" evidence="1">
    <location>
        <position position="262"/>
    </location>
    <ligand>
        <name>substrate</name>
    </ligand>
</feature>
<feature type="binding site" evidence="1">
    <location>
        <position position="290"/>
    </location>
    <ligand>
        <name>Fe cation</name>
        <dbReference type="ChEBI" id="CHEBI:24875"/>
    </ligand>
</feature>
<comment type="function">
    <text evidence="1">Required for the formation of a threonylcarbamoyl group on adenosine at position 37 (t(6)A37) in tRNAs that read codons beginning with adenine. Is probably involved in the transfer of the threonylcarbamoyl moiety of threonylcarbamoyl-AMP (TC-AMP) to the N6 group of A37.</text>
</comment>
<comment type="catalytic activity">
    <reaction evidence="1">
        <text>L-threonylcarbamoyladenylate + adenosine(37) in tRNA = N(6)-L-threonylcarbamoyladenosine(37) in tRNA + AMP + H(+)</text>
        <dbReference type="Rhea" id="RHEA:37059"/>
        <dbReference type="Rhea" id="RHEA-COMP:10162"/>
        <dbReference type="Rhea" id="RHEA-COMP:10163"/>
        <dbReference type="ChEBI" id="CHEBI:15378"/>
        <dbReference type="ChEBI" id="CHEBI:73682"/>
        <dbReference type="ChEBI" id="CHEBI:74411"/>
        <dbReference type="ChEBI" id="CHEBI:74418"/>
        <dbReference type="ChEBI" id="CHEBI:456215"/>
        <dbReference type="EC" id="2.3.1.234"/>
    </reaction>
</comment>
<comment type="cofactor">
    <cofactor evidence="1">
        <name>Fe(2+)</name>
        <dbReference type="ChEBI" id="CHEBI:29033"/>
    </cofactor>
    <text evidence="1">Binds 1 Fe(2+) ion per subunit.</text>
</comment>
<comment type="subcellular location">
    <subcellularLocation>
        <location evidence="1">Cytoplasm</location>
    </subcellularLocation>
</comment>
<comment type="similarity">
    <text evidence="1">Belongs to the KAE1 / TsaD family.</text>
</comment>
<keyword id="KW-0012">Acyltransferase</keyword>
<keyword id="KW-0963">Cytoplasm</keyword>
<keyword id="KW-0408">Iron</keyword>
<keyword id="KW-0479">Metal-binding</keyword>
<keyword id="KW-0808">Transferase</keyword>
<keyword id="KW-0819">tRNA processing</keyword>
<reference key="1">
    <citation type="journal article" date="2009" name="Proc. Natl. Acad. Sci. U.S.A.">
        <title>Biogeography of the Sulfolobus islandicus pan-genome.</title>
        <authorList>
            <person name="Reno M.L."/>
            <person name="Held N.L."/>
            <person name="Fields C.J."/>
            <person name="Burke P.V."/>
            <person name="Whitaker R.J."/>
        </authorList>
    </citation>
    <scope>NUCLEOTIDE SEQUENCE [LARGE SCALE GENOMIC DNA]</scope>
    <source>
        <strain>M.16.4 / Kamchatka #3</strain>
    </source>
</reference>
<name>KAE1_SACI6</name>